<sequence length="720" mass="78468">MITANSFERTIGGRKLTIESGKMARLADAAVTIRYADTELLVTLCAAKKPREGVDFLPLTIDYEERMYAAGKIPGGFIRREGRPSEQAILAGRLTDRPLRPLLPKEWRNELQIIITVIASDKENDADIWGVVGASTVLTMSQIPYEGPVGASRVGYTNGEFVLNPTFAQLEQSQMDLVVVSTRKAVVMIEAGSKEIPEDLMIKAIEFAHQANQELIDLQDEIRAKLGKEKLPVPVLEIPEEVKAAVAAFVKGRVNEALSHQDKTLRENAVEALQSELVEALAETYAEGDILAAYDKEIKKAIRSTILEKDIRVNGRGIKQLRQLDAETGILPRVHGSALFTRGDTQVMAITTLGSLQEAQQLDGLSAEDTKRFMLHYNFAPFSTGEVKRSGSPGRREIGHGALAERALVPVLPTPEEFPYTIRMVADVVGSSGSTSMGSVCSSSLSLMDAGVPVKKAVAGISIGLITGENDTYCTITDIEGIEDNYGDMDFKVAGTRDGITAIQVDMKVKGISFDVIRDAIYQAKEARYTILEVMDKALAQPKTELSPYAPRMYKISIDPSKIGSVIGSGGKTIRSIIEQTNTTVDIENDGTVVIGATDEASAQKAIKIIEDLTKDVEAGSVYTGKVTRIMTFGAFVEILPGKEGMVHISELADHRVEKVEDVVKVGDEITVKVTEIDSQGRINLSRRVILNPNAVPISRNRDSQPRRSGPFRPQDRSNS</sequence>
<accession>Q3Z7V6</accession>
<reference key="1">
    <citation type="journal article" date="2005" name="Science">
        <title>Genome sequence of the PCE-dechlorinating bacterium Dehalococcoides ethenogenes.</title>
        <authorList>
            <person name="Seshadri R."/>
            <person name="Adrian L."/>
            <person name="Fouts D.E."/>
            <person name="Eisen J.A."/>
            <person name="Phillippy A.M."/>
            <person name="Methe B.A."/>
            <person name="Ward N.L."/>
            <person name="Nelson W.C."/>
            <person name="DeBoy R.T."/>
            <person name="Khouri H.M."/>
            <person name="Kolonay J.F."/>
            <person name="Dodson R.J."/>
            <person name="Daugherty S.C."/>
            <person name="Brinkac L.M."/>
            <person name="Sullivan S.A."/>
            <person name="Madupu R."/>
            <person name="Nelson K.E."/>
            <person name="Kang K.H."/>
            <person name="Impraim M."/>
            <person name="Tran K."/>
            <person name="Robinson J.M."/>
            <person name="Forberger H.A."/>
            <person name="Fraser C.M."/>
            <person name="Zinder S.H."/>
            <person name="Heidelberg J.F."/>
        </authorList>
    </citation>
    <scope>NUCLEOTIDE SEQUENCE [LARGE SCALE GENOMIC DNA]</scope>
    <source>
        <strain>ATCC BAA-2266 / KCTC 15142 / 195</strain>
    </source>
</reference>
<feature type="chain" id="PRO_0000329617" description="Polyribonucleotide nucleotidyltransferase">
    <location>
        <begin position="1"/>
        <end position="720"/>
    </location>
</feature>
<feature type="domain" description="KH" evidence="1">
    <location>
        <begin position="551"/>
        <end position="610"/>
    </location>
</feature>
<feature type="domain" description="S1 motif" evidence="1">
    <location>
        <begin position="620"/>
        <end position="688"/>
    </location>
</feature>
<feature type="region of interest" description="Disordered" evidence="2">
    <location>
        <begin position="697"/>
        <end position="720"/>
    </location>
</feature>
<feature type="binding site" evidence="1">
    <location>
        <position position="484"/>
    </location>
    <ligand>
        <name>Mg(2+)</name>
        <dbReference type="ChEBI" id="CHEBI:18420"/>
    </ligand>
</feature>
<feature type="binding site" evidence="1">
    <location>
        <position position="490"/>
    </location>
    <ligand>
        <name>Mg(2+)</name>
        <dbReference type="ChEBI" id="CHEBI:18420"/>
    </ligand>
</feature>
<gene>
    <name evidence="1" type="primary">pnp</name>
    <name type="ordered locus">DET0970</name>
</gene>
<comment type="function">
    <text evidence="1">Involved in mRNA degradation. Catalyzes the phosphorolysis of single-stranded polyribonucleotides processively in the 3'- to 5'-direction.</text>
</comment>
<comment type="catalytic activity">
    <reaction evidence="1">
        <text>RNA(n+1) + phosphate = RNA(n) + a ribonucleoside 5'-diphosphate</text>
        <dbReference type="Rhea" id="RHEA:22096"/>
        <dbReference type="Rhea" id="RHEA-COMP:14527"/>
        <dbReference type="Rhea" id="RHEA-COMP:17342"/>
        <dbReference type="ChEBI" id="CHEBI:43474"/>
        <dbReference type="ChEBI" id="CHEBI:57930"/>
        <dbReference type="ChEBI" id="CHEBI:140395"/>
        <dbReference type="EC" id="2.7.7.8"/>
    </reaction>
</comment>
<comment type="cofactor">
    <cofactor evidence="1">
        <name>Mg(2+)</name>
        <dbReference type="ChEBI" id="CHEBI:18420"/>
    </cofactor>
</comment>
<comment type="subcellular location">
    <subcellularLocation>
        <location evidence="1">Cytoplasm</location>
    </subcellularLocation>
</comment>
<comment type="similarity">
    <text evidence="1">Belongs to the polyribonucleotide nucleotidyltransferase family.</text>
</comment>
<keyword id="KW-0963">Cytoplasm</keyword>
<keyword id="KW-0460">Magnesium</keyword>
<keyword id="KW-0479">Metal-binding</keyword>
<keyword id="KW-0548">Nucleotidyltransferase</keyword>
<keyword id="KW-0694">RNA-binding</keyword>
<keyword id="KW-0808">Transferase</keyword>
<dbReference type="EC" id="2.7.7.8" evidence="1"/>
<dbReference type="EMBL" id="CP000027">
    <property type="protein sequence ID" value="AAW39716.1"/>
    <property type="molecule type" value="Genomic_DNA"/>
</dbReference>
<dbReference type="RefSeq" id="WP_010936672.1">
    <property type="nucleotide sequence ID" value="NC_002936.3"/>
</dbReference>
<dbReference type="SMR" id="Q3Z7V6"/>
<dbReference type="FunCoup" id="Q3Z7V6">
    <property type="interactions" value="358"/>
</dbReference>
<dbReference type="STRING" id="243164.DET0970"/>
<dbReference type="GeneID" id="3229678"/>
<dbReference type="KEGG" id="det:DET0970"/>
<dbReference type="PATRIC" id="fig|243164.10.peg.919"/>
<dbReference type="eggNOG" id="COG1185">
    <property type="taxonomic scope" value="Bacteria"/>
</dbReference>
<dbReference type="HOGENOM" id="CLU_004217_2_2_0"/>
<dbReference type="InParanoid" id="Q3Z7V6"/>
<dbReference type="Proteomes" id="UP000008289">
    <property type="component" value="Chromosome"/>
</dbReference>
<dbReference type="GO" id="GO:0005829">
    <property type="term" value="C:cytosol"/>
    <property type="evidence" value="ECO:0007669"/>
    <property type="project" value="TreeGrafter"/>
</dbReference>
<dbReference type="GO" id="GO:0000175">
    <property type="term" value="F:3'-5'-RNA exonuclease activity"/>
    <property type="evidence" value="ECO:0007669"/>
    <property type="project" value="TreeGrafter"/>
</dbReference>
<dbReference type="GO" id="GO:0000287">
    <property type="term" value="F:magnesium ion binding"/>
    <property type="evidence" value="ECO:0007669"/>
    <property type="project" value="UniProtKB-UniRule"/>
</dbReference>
<dbReference type="GO" id="GO:0004654">
    <property type="term" value="F:polyribonucleotide nucleotidyltransferase activity"/>
    <property type="evidence" value="ECO:0007669"/>
    <property type="project" value="UniProtKB-UniRule"/>
</dbReference>
<dbReference type="GO" id="GO:0003723">
    <property type="term" value="F:RNA binding"/>
    <property type="evidence" value="ECO:0007669"/>
    <property type="project" value="UniProtKB-UniRule"/>
</dbReference>
<dbReference type="GO" id="GO:0006402">
    <property type="term" value="P:mRNA catabolic process"/>
    <property type="evidence" value="ECO:0007669"/>
    <property type="project" value="UniProtKB-UniRule"/>
</dbReference>
<dbReference type="GO" id="GO:0006396">
    <property type="term" value="P:RNA processing"/>
    <property type="evidence" value="ECO:0007669"/>
    <property type="project" value="InterPro"/>
</dbReference>
<dbReference type="CDD" id="cd02393">
    <property type="entry name" value="KH-I_PNPase"/>
    <property type="match status" value="1"/>
</dbReference>
<dbReference type="CDD" id="cd11363">
    <property type="entry name" value="RNase_PH_PNPase_1"/>
    <property type="match status" value="1"/>
</dbReference>
<dbReference type="CDD" id="cd11364">
    <property type="entry name" value="RNase_PH_PNPase_2"/>
    <property type="match status" value="1"/>
</dbReference>
<dbReference type="CDD" id="cd04472">
    <property type="entry name" value="S1_PNPase"/>
    <property type="match status" value="1"/>
</dbReference>
<dbReference type="FunFam" id="2.40.50.140:FF:000023">
    <property type="entry name" value="Polyribonucleotide nucleotidyltransferase"/>
    <property type="match status" value="1"/>
</dbReference>
<dbReference type="FunFam" id="3.30.1370.10:FF:000001">
    <property type="entry name" value="Polyribonucleotide nucleotidyltransferase"/>
    <property type="match status" value="1"/>
</dbReference>
<dbReference type="FunFam" id="3.30.230.70:FF:000001">
    <property type="entry name" value="Polyribonucleotide nucleotidyltransferase"/>
    <property type="match status" value="1"/>
</dbReference>
<dbReference type="FunFam" id="3.30.230.70:FF:000002">
    <property type="entry name" value="Polyribonucleotide nucleotidyltransferase"/>
    <property type="match status" value="1"/>
</dbReference>
<dbReference type="Gene3D" id="3.30.230.70">
    <property type="entry name" value="GHMP Kinase, N-terminal domain"/>
    <property type="match status" value="2"/>
</dbReference>
<dbReference type="Gene3D" id="3.30.1370.10">
    <property type="entry name" value="K Homology domain, type 1"/>
    <property type="match status" value="1"/>
</dbReference>
<dbReference type="Gene3D" id="2.40.50.140">
    <property type="entry name" value="Nucleic acid-binding proteins"/>
    <property type="match status" value="1"/>
</dbReference>
<dbReference type="HAMAP" id="MF_01595">
    <property type="entry name" value="PNPase"/>
    <property type="match status" value="1"/>
</dbReference>
<dbReference type="InterPro" id="IPR001247">
    <property type="entry name" value="ExoRNase_PH_dom1"/>
</dbReference>
<dbReference type="InterPro" id="IPR015847">
    <property type="entry name" value="ExoRNase_PH_dom2"/>
</dbReference>
<dbReference type="InterPro" id="IPR036345">
    <property type="entry name" value="ExoRNase_PH_dom2_sf"/>
</dbReference>
<dbReference type="InterPro" id="IPR004087">
    <property type="entry name" value="KH_dom"/>
</dbReference>
<dbReference type="InterPro" id="IPR004088">
    <property type="entry name" value="KH_dom_type_1"/>
</dbReference>
<dbReference type="InterPro" id="IPR036612">
    <property type="entry name" value="KH_dom_type_1_sf"/>
</dbReference>
<dbReference type="InterPro" id="IPR012340">
    <property type="entry name" value="NA-bd_OB-fold"/>
</dbReference>
<dbReference type="InterPro" id="IPR012162">
    <property type="entry name" value="PNPase"/>
</dbReference>
<dbReference type="InterPro" id="IPR027408">
    <property type="entry name" value="PNPase/RNase_PH_dom_sf"/>
</dbReference>
<dbReference type="InterPro" id="IPR015848">
    <property type="entry name" value="PNPase_PH_RNA-bd_bac/org-type"/>
</dbReference>
<dbReference type="InterPro" id="IPR036456">
    <property type="entry name" value="PNPase_PH_RNA-bd_sf"/>
</dbReference>
<dbReference type="InterPro" id="IPR020568">
    <property type="entry name" value="Ribosomal_Su5_D2-typ_SF"/>
</dbReference>
<dbReference type="InterPro" id="IPR003029">
    <property type="entry name" value="S1_domain"/>
</dbReference>
<dbReference type="NCBIfam" id="TIGR03591">
    <property type="entry name" value="polynuc_phos"/>
    <property type="match status" value="1"/>
</dbReference>
<dbReference type="NCBIfam" id="NF008805">
    <property type="entry name" value="PRK11824.1"/>
    <property type="match status" value="1"/>
</dbReference>
<dbReference type="PANTHER" id="PTHR11252">
    <property type="entry name" value="POLYRIBONUCLEOTIDE NUCLEOTIDYLTRANSFERASE"/>
    <property type="match status" value="1"/>
</dbReference>
<dbReference type="PANTHER" id="PTHR11252:SF0">
    <property type="entry name" value="POLYRIBONUCLEOTIDE NUCLEOTIDYLTRANSFERASE 1, MITOCHONDRIAL"/>
    <property type="match status" value="1"/>
</dbReference>
<dbReference type="Pfam" id="PF00013">
    <property type="entry name" value="KH_1"/>
    <property type="match status" value="1"/>
</dbReference>
<dbReference type="Pfam" id="PF03726">
    <property type="entry name" value="PNPase"/>
    <property type="match status" value="1"/>
</dbReference>
<dbReference type="Pfam" id="PF01138">
    <property type="entry name" value="RNase_PH"/>
    <property type="match status" value="2"/>
</dbReference>
<dbReference type="Pfam" id="PF03725">
    <property type="entry name" value="RNase_PH_C"/>
    <property type="match status" value="1"/>
</dbReference>
<dbReference type="Pfam" id="PF00575">
    <property type="entry name" value="S1"/>
    <property type="match status" value="1"/>
</dbReference>
<dbReference type="PIRSF" id="PIRSF005499">
    <property type="entry name" value="PNPase"/>
    <property type="match status" value="1"/>
</dbReference>
<dbReference type="SMART" id="SM00322">
    <property type="entry name" value="KH"/>
    <property type="match status" value="1"/>
</dbReference>
<dbReference type="SMART" id="SM00316">
    <property type="entry name" value="S1"/>
    <property type="match status" value="1"/>
</dbReference>
<dbReference type="SUPFAM" id="SSF54791">
    <property type="entry name" value="Eukaryotic type KH-domain (KH-domain type I)"/>
    <property type="match status" value="1"/>
</dbReference>
<dbReference type="SUPFAM" id="SSF50249">
    <property type="entry name" value="Nucleic acid-binding proteins"/>
    <property type="match status" value="1"/>
</dbReference>
<dbReference type="SUPFAM" id="SSF46915">
    <property type="entry name" value="Polynucleotide phosphorylase/guanosine pentaphosphate synthase (PNPase/GPSI), domain 3"/>
    <property type="match status" value="1"/>
</dbReference>
<dbReference type="SUPFAM" id="SSF55666">
    <property type="entry name" value="Ribonuclease PH domain 2-like"/>
    <property type="match status" value="2"/>
</dbReference>
<dbReference type="SUPFAM" id="SSF54211">
    <property type="entry name" value="Ribosomal protein S5 domain 2-like"/>
    <property type="match status" value="2"/>
</dbReference>
<dbReference type="PROSITE" id="PS50084">
    <property type="entry name" value="KH_TYPE_1"/>
    <property type="match status" value="1"/>
</dbReference>
<dbReference type="PROSITE" id="PS50126">
    <property type="entry name" value="S1"/>
    <property type="match status" value="1"/>
</dbReference>
<protein>
    <recommendedName>
        <fullName evidence="1">Polyribonucleotide nucleotidyltransferase</fullName>
        <ecNumber evidence="1">2.7.7.8</ecNumber>
    </recommendedName>
    <alternativeName>
        <fullName evidence="1">Polynucleotide phosphorylase</fullName>
        <shortName evidence="1">PNPase</shortName>
    </alternativeName>
</protein>
<name>PNP_DEHM1</name>
<evidence type="ECO:0000255" key="1">
    <source>
        <dbReference type="HAMAP-Rule" id="MF_01595"/>
    </source>
</evidence>
<evidence type="ECO:0000256" key="2">
    <source>
        <dbReference type="SAM" id="MobiDB-lite"/>
    </source>
</evidence>
<organism>
    <name type="scientific">Dehalococcoides mccartyi (strain ATCC BAA-2266 / KCTC 15142 / 195)</name>
    <name type="common">Dehalococcoides ethenogenes (strain 195)</name>
    <dbReference type="NCBI Taxonomy" id="243164"/>
    <lineage>
        <taxon>Bacteria</taxon>
        <taxon>Bacillati</taxon>
        <taxon>Chloroflexota</taxon>
        <taxon>Dehalococcoidia</taxon>
        <taxon>Dehalococcoidales</taxon>
        <taxon>Dehalococcoidaceae</taxon>
        <taxon>Dehalococcoides</taxon>
    </lineage>
</organism>
<proteinExistence type="inferred from homology"/>